<keyword id="KW-0963">Cytoplasm</keyword>
<keyword id="KW-0326">Glycosidase</keyword>
<keyword id="KW-0378">Hydrolase</keyword>
<reference key="1">
    <citation type="journal article" date="2008" name="Genome Res.">
        <title>Comparative genome analysis of Salmonella enteritidis PT4 and Salmonella gallinarum 287/91 provides insights into evolutionary and host adaptation pathways.</title>
        <authorList>
            <person name="Thomson N.R."/>
            <person name="Clayton D.J."/>
            <person name="Windhorst D."/>
            <person name="Vernikos G."/>
            <person name="Davidson S."/>
            <person name="Churcher C."/>
            <person name="Quail M.A."/>
            <person name="Stevens M."/>
            <person name="Jones M.A."/>
            <person name="Watson M."/>
            <person name="Barron A."/>
            <person name="Layton A."/>
            <person name="Pickard D."/>
            <person name="Kingsley R.A."/>
            <person name="Bignell A."/>
            <person name="Clark L."/>
            <person name="Harris B."/>
            <person name="Ormond D."/>
            <person name="Abdellah Z."/>
            <person name="Brooks K."/>
            <person name="Cherevach I."/>
            <person name="Chillingworth T."/>
            <person name="Woodward J."/>
            <person name="Norberczak H."/>
            <person name="Lord A."/>
            <person name="Arrowsmith C."/>
            <person name="Jagels K."/>
            <person name="Moule S."/>
            <person name="Mungall K."/>
            <person name="Saunders M."/>
            <person name="Whitehead S."/>
            <person name="Chabalgoity J.A."/>
            <person name="Maskell D."/>
            <person name="Humphreys T."/>
            <person name="Roberts M."/>
            <person name="Barrow P.A."/>
            <person name="Dougan G."/>
            <person name="Parkhill J."/>
        </authorList>
    </citation>
    <scope>NUCLEOTIDE SEQUENCE [LARGE SCALE GENOMIC DNA]</scope>
    <source>
        <strain>P125109</strain>
    </source>
</reference>
<gene>
    <name evidence="1" type="primary">treF</name>
    <name type="ordered locus">SEN3426</name>
</gene>
<dbReference type="EC" id="3.2.1.28" evidence="1"/>
<dbReference type="EMBL" id="AM933172">
    <property type="protein sequence ID" value="CAR35002.1"/>
    <property type="molecule type" value="Genomic_DNA"/>
</dbReference>
<dbReference type="RefSeq" id="WP_000934257.1">
    <property type="nucleotide sequence ID" value="NC_011294.1"/>
</dbReference>
<dbReference type="SMR" id="B5R404"/>
<dbReference type="CAZy" id="GH37">
    <property type="family name" value="Glycoside Hydrolase Family 37"/>
</dbReference>
<dbReference type="KEGG" id="set:SEN3426"/>
<dbReference type="HOGENOM" id="CLU_006451_3_1_6"/>
<dbReference type="UniPathway" id="UPA00300">
    <property type="reaction ID" value="UER00535"/>
</dbReference>
<dbReference type="Proteomes" id="UP000000613">
    <property type="component" value="Chromosome"/>
</dbReference>
<dbReference type="GO" id="GO:0005737">
    <property type="term" value="C:cytoplasm"/>
    <property type="evidence" value="ECO:0007669"/>
    <property type="project" value="UniProtKB-SubCell"/>
</dbReference>
<dbReference type="GO" id="GO:0004555">
    <property type="term" value="F:alpha,alpha-trehalase activity"/>
    <property type="evidence" value="ECO:0007669"/>
    <property type="project" value="UniProtKB-UniRule"/>
</dbReference>
<dbReference type="GO" id="GO:0071474">
    <property type="term" value="P:cellular hyperosmotic response"/>
    <property type="evidence" value="ECO:0007669"/>
    <property type="project" value="InterPro"/>
</dbReference>
<dbReference type="GO" id="GO:0005993">
    <property type="term" value="P:trehalose catabolic process"/>
    <property type="evidence" value="ECO:0007669"/>
    <property type="project" value="UniProtKB-UniRule"/>
</dbReference>
<dbReference type="FunFam" id="1.50.10.10:FF:000003">
    <property type="entry name" value="Cytoplasmic trehalase"/>
    <property type="match status" value="1"/>
</dbReference>
<dbReference type="Gene3D" id="1.50.10.10">
    <property type="match status" value="1"/>
</dbReference>
<dbReference type="HAMAP" id="MF_01059">
    <property type="entry name" value="Cyt_trehalase"/>
    <property type="match status" value="1"/>
</dbReference>
<dbReference type="InterPro" id="IPR008928">
    <property type="entry name" value="6-hairpin_glycosidase_sf"/>
</dbReference>
<dbReference type="InterPro" id="IPR012341">
    <property type="entry name" value="6hp_glycosidase-like_sf"/>
</dbReference>
<dbReference type="InterPro" id="IPR023715">
    <property type="entry name" value="Cyt_trehalase"/>
</dbReference>
<dbReference type="InterPro" id="IPR001661">
    <property type="entry name" value="Glyco_hydro_37"/>
</dbReference>
<dbReference type="InterPro" id="IPR018232">
    <property type="entry name" value="Glyco_hydro_37_CS"/>
</dbReference>
<dbReference type="NCBIfam" id="NF009773">
    <property type="entry name" value="PRK13270.1"/>
    <property type="match status" value="1"/>
</dbReference>
<dbReference type="NCBIfam" id="NF009774">
    <property type="entry name" value="PRK13271.1"/>
    <property type="match status" value="1"/>
</dbReference>
<dbReference type="PANTHER" id="PTHR23403:SF8">
    <property type="entry name" value="CYTOPLASMIC TREHALASE"/>
    <property type="match status" value="1"/>
</dbReference>
<dbReference type="PANTHER" id="PTHR23403">
    <property type="entry name" value="TREHALASE"/>
    <property type="match status" value="1"/>
</dbReference>
<dbReference type="Pfam" id="PF01204">
    <property type="entry name" value="Trehalase"/>
    <property type="match status" value="1"/>
</dbReference>
<dbReference type="PRINTS" id="PR00744">
    <property type="entry name" value="GLHYDRLASE37"/>
</dbReference>
<dbReference type="SUPFAM" id="SSF48208">
    <property type="entry name" value="Six-hairpin glycosidases"/>
    <property type="match status" value="1"/>
</dbReference>
<dbReference type="PROSITE" id="PS00927">
    <property type="entry name" value="TREHALASE_1"/>
    <property type="match status" value="1"/>
</dbReference>
<dbReference type="PROSITE" id="PS00928">
    <property type="entry name" value="TREHALASE_2"/>
    <property type="match status" value="1"/>
</dbReference>
<feature type="chain" id="PRO_1000136410" description="Cytoplasmic trehalase">
    <location>
        <begin position="1"/>
        <end position="549"/>
    </location>
</feature>
<feature type="active site" description="Proton donor/acceptor" evidence="1">
    <location>
        <position position="326"/>
    </location>
</feature>
<feature type="active site" description="Proton donor/acceptor" evidence="1">
    <location>
        <position position="509"/>
    </location>
</feature>
<feature type="binding site" evidence="1">
    <location>
        <position position="168"/>
    </location>
    <ligand>
        <name>substrate</name>
    </ligand>
</feature>
<feature type="binding site" evidence="1">
    <location>
        <begin position="175"/>
        <end position="176"/>
    </location>
    <ligand>
        <name>substrate</name>
    </ligand>
</feature>
<feature type="binding site" evidence="1">
    <location>
        <position position="212"/>
    </location>
    <ligand>
        <name>substrate</name>
    </ligand>
</feature>
<feature type="binding site" evidence="1">
    <location>
        <begin position="221"/>
        <end position="223"/>
    </location>
    <ligand>
        <name>substrate</name>
    </ligand>
</feature>
<feature type="binding site" evidence="1">
    <location>
        <begin position="292"/>
        <end position="294"/>
    </location>
    <ligand>
        <name>substrate</name>
    </ligand>
</feature>
<feature type="binding site" evidence="1">
    <location>
        <position position="324"/>
    </location>
    <ligand>
        <name>substrate</name>
    </ligand>
</feature>
<feature type="binding site" evidence="1">
    <location>
        <position position="525"/>
    </location>
    <ligand>
        <name>substrate</name>
    </ligand>
</feature>
<organism>
    <name type="scientific">Salmonella enteritidis PT4 (strain P125109)</name>
    <dbReference type="NCBI Taxonomy" id="550537"/>
    <lineage>
        <taxon>Bacteria</taxon>
        <taxon>Pseudomonadati</taxon>
        <taxon>Pseudomonadota</taxon>
        <taxon>Gammaproteobacteria</taxon>
        <taxon>Enterobacterales</taxon>
        <taxon>Enterobacteriaceae</taxon>
        <taxon>Salmonella</taxon>
    </lineage>
</organism>
<proteinExistence type="inferred from homology"/>
<name>TREF_SALEP</name>
<protein>
    <recommendedName>
        <fullName evidence="1">Cytoplasmic trehalase</fullName>
        <ecNumber evidence="1">3.2.1.28</ecNumber>
    </recommendedName>
    <alternativeName>
        <fullName evidence="1">Alpha,alpha-trehalase</fullName>
    </alternativeName>
    <alternativeName>
        <fullName evidence="1">Alpha,alpha-trehalose glucohydrolase</fullName>
    </alternativeName>
</protein>
<accession>B5R404</accession>
<comment type="function">
    <text evidence="1">Hydrolyzes trehalose to glucose. Could be involved, in cells returning to low osmolarity conditions, in the utilization of the accumulated cytoplasmic trehalose, which was synthesized in response to high osmolarity.</text>
</comment>
<comment type="catalytic activity">
    <reaction evidence="1">
        <text>alpha,alpha-trehalose + H2O = alpha-D-glucose + beta-D-glucose</text>
        <dbReference type="Rhea" id="RHEA:32675"/>
        <dbReference type="ChEBI" id="CHEBI:15377"/>
        <dbReference type="ChEBI" id="CHEBI:15903"/>
        <dbReference type="ChEBI" id="CHEBI:16551"/>
        <dbReference type="ChEBI" id="CHEBI:17925"/>
        <dbReference type="EC" id="3.2.1.28"/>
    </reaction>
</comment>
<comment type="pathway">
    <text evidence="1">Glycan degradation; trehalose degradation; D-glucose from alpha,alpha-trehalose: step 1/1.</text>
</comment>
<comment type="subunit">
    <text evidence="1">Monomer.</text>
</comment>
<comment type="subcellular location">
    <subcellularLocation>
        <location evidence="1">Cytoplasm</location>
    </subcellularLocation>
</comment>
<comment type="similarity">
    <text evidence="1">Belongs to the glycosyl hydrolase 37 family.</text>
</comment>
<evidence type="ECO:0000255" key="1">
    <source>
        <dbReference type="HAMAP-Rule" id="MF_01059"/>
    </source>
</evidence>
<sequence length="549" mass="63644">MLNQKLNPTPSEDLTIDVDLLYETDPCELKLDEMIEAEPEPEMIEGLPASDALTPADRYLELFEHVQSTKLFPDSKTFPDCAPKMDPLDILIRYRKVRRHRDFDLRRFVENHFWLPETLSSEYVSNPENSLKEHIDQLWPILTREPQDHIPWSSLLALPQSYIVPGGRFSETYYWDSYFTMLGLAESGREDLLKCMADNFAWMIENYGHIPNGNRTYYLSRSQPPVFALMVELFEEDGVRGARRYLDHLKMEYAFWMDGAESLALNQAYRHVVRMPDGSLLNRYWDDRDTPRDESWLEDVETAKHSGRPPNEVYRDLRAGAASGWDYSSRWLRDAGRLASIRTTQFIPIDLNAFLYKLESAIANISALKGERDTEALFRQKASDRRAAVNHYLWDDENGCYRDYDWRREEMALFSAASIVPLYVGMANHEQADRLANVVRSRLLTPGGIMATEYETGEQWDKPNGWAPLQWMAIQGFKRYGDDMLGDEIAHNWLKTVNHFYQEHHKLIEKYHISGGTPREGGGGEYPLQDGFGWTNGVVRRLIGLYGEP</sequence>